<name>NTF3_CEREL</name>
<feature type="signal peptide" evidence="2">
    <location>
        <begin position="1"/>
        <end position="18"/>
    </location>
</feature>
<feature type="propeptide" id="PRO_0000019655" evidence="1">
    <location>
        <begin position="19"/>
        <end position="134"/>
    </location>
</feature>
<feature type="chain" id="PRO_0000019656" description="Neurotrophin-3">
    <location>
        <begin position="135"/>
        <end position="154" status="greater than"/>
    </location>
</feature>
<feature type="non-terminal residue">
    <location>
        <position position="154"/>
    </location>
</feature>
<sequence length="154" mass="17859">MSILFYVMFLAYLRGVQGNSMDQRSLPEDSLNSLIIKLIQADILKNKLSKQMVDVKENYQSTLPKAEDSARESAKSEFQPVMVMGPELLWYQRRYNSSRFLLSDSIPLESPPLFLIEVHLANPMVNSRSPRRKRYAEHKSHRGEYSVCDSESLW</sequence>
<gene>
    <name type="primary">NTF3</name>
</gene>
<proteinExistence type="evidence at transcript level"/>
<evidence type="ECO:0000250" key="1"/>
<evidence type="ECO:0000255" key="2"/>
<evidence type="ECO:0000305" key="3"/>
<accession>Q95150</accession>
<protein>
    <recommendedName>
        <fullName>Neurotrophin-3</fullName>
        <shortName>NT-3</shortName>
    </recommendedName>
</protein>
<keyword id="KW-0165">Cleavage on pair of basic residues</keyword>
<keyword id="KW-0339">Growth factor</keyword>
<keyword id="KW-0964">Secreted</keyword>
<keyword id="KW-0732">Signal</keyword>
<organism>
    <name type="scientific">Cervus elaphus</name>
    <name type="common">Red deer</name>
    <dbReference type="NCBI Taxonomy" id="9860"/>
    <lineage>
        <taxon>Eukaryota</taxon>
        <taxon>Metazoa</taxon>
        <taxon>Chordata</taxon>
        <taxon>Craniata</taxon>
        <taxon>Vertebrata</taxon>
        <taxon>Euteleostomi</taxon>
        <taxon>Mammalia</taxon>
        <taxon>Eutheria</taxon>
        <taxon>Laurasiatheria</taxon>
        <taxon>Artiodactyla</taxon>
        <taxon>Ruminantia</taxon>
        <taxon>Pecora</taxon>
        <taxon>Cervidae</taxon>
        <taxon>Cervinae</taxon>
        <taxon>Cervus</taxon>
    </lineage>
</organism>
<dbReference type="EMBL" id="U66715">
    <property type="protein sequence ID" value="AAB07024.1"/>
    <property type="molecule type" value="mRNA"/>
</dbReference>
<dbReference type="SMR" id="Q95150"/>
<dbReference type="GO" id="GO:0030424">
    <property type="term" value="C:axon"/>
    <property type="evidence" value="ECO:0007669"/>
    <property type="project" value="TreeGrafter"/>
</dbReference>
<dbReference type="GO" id="GO:0030425">
    <property type="term" value="C:dendrite"/>
    <property type="evidence" value="ECO:0007669"/>
    <property type="project" value="TreeGrafter"/>
</dbReference>
<dbReference type="GO" id="GO:0005615">
    <property type="term" value="C:extracellular space"/>
    <property type="evidence" value="ECO:0007669"/>
    <property type="project" value="TreeGrafter"/>
</dbReference>
<dbReference type="GO" id="GO:0008021">
    <property type="term" value="C:synaptic vesicle"/>
    <property type="evidence" value="ECO:0007669"/>
    <property type="project" value="TreeGrafter"/>
</dbReference>
<dbReference type="GO" id="GO:0008083">
    <property type="term" value="F:growth factor activity"/>
    <property type="evidence" value="ECO:0007669"/>
    <property type="project" value="UniProtKB-KW"/>
</dbReference>
<dbReference type="GO" id="GO:0005163">
    <property type="term" value="F:nerve growth factor receptor binding"/>
    <property type="evidence" value="ECO:0007669"/>
    <property type="project" value="TreeGrafter"/>
</dbReference>
<dbReference type="GO" id="GO:0007169">
    <property type="term" value="P:cell surface receptor protein tyrosine kinase signaling pathway"/>
    <property type="evidence" value="ECO:0007669"/>
    <property type="project" value="TreeGrafter"/>
</dbReference>
<dbReference type="GO" id="GO:0050804">
    <property type="term" value="P:modulation of chemical synaptic transmission"/>
    <property type="evidence" value="ECO:0007669"/>
    <property type="project" value="TreeGrafter"/>
</dbReference>
<dbReference type="GO" id="GO:0043524">
    <property type="term" value="P:negative regulation of neuron apoptotic process"/>
    <property type="evidence" value="ECO:0007669"/>
    <property type="project" value="TreeGrafter"/>
</dbReference>
<dbReference type="GO" id="GO:0021675">
    <property type="term" value="P:nerve development"/>
    <property type="evidence" value="ECO:0007669"/>
    <property type="project" value="TreeGrafter"/>
</dbReference>
<dbReference type="GO" id="GO:0038180">
    <property type="term" value="P:nerve growth factor signaling pathway"/>
    <property type="evidence" value="ECO:0007669"/>
    <property type="project" value="TreeGrafter"/>
</dbReference>
<dbReference type="GO" id="GO:0048812">
    <property type="term" value="P:neuron projection morphogenesis"/>
    <property type="evidence" value="ECO:0007669"/>
    <property type="project" value="TreeGrafter"/>
</dbReference>
<dbReference type="InterPro" id="IPR020408">
    <property type="entry name" value="Nerve_growth_factor-like"/>
</dbReference>
<dbReference type="InterPro" id="IPR015578">
    <property type="entry name" value="Neurotrophin-3"/>
</dbReference>
<dbReference type="InterPro" id="IPR045815">
    <property type="entry name" value="NTF3_N"/>
</dbReference>
<dbReference type="PANTHER" id="PTHR11589">
    <property type="entry name" value="NERVE GROWTH FACTOR NGF -RELATED"/>
    <property type="match status" value="1"/>
</dbReference>
<dbReference type="PANTHER" id="PTHR11589:SF4">
    <property type="entry name" value="NEUROTROPHIN-3"/>
    <property type="match status" value="1"/>
</dbReference>
<dbReference type="Pfam" id="PF19338">
    <property type="entry name" value="NTF3_N"/>
    <property type="match status" value="1"/>
</dbReference>
<dbReference type="PIRSF" id="PIRSF001789">
    <property type="entry name" value="NGF"/>
    <property type="match status" value="1"/>
</dbReference>
<dbReference type="PRINTS" id="PR01914">
    <property type="entry name" value="NEUROTROPHN3"/>
</dbReference>
<reference key="1">
    <citation type="journal article" date="1997" name="J. Mol. Endocrinol.">
        <title>Expression of neurotrophin-3 in the growing velvet antler of the red deer Cervus elaphus.</title>
        <authorList>
            <person name="Garcia R.L."/>
            <person name="Sadighi M."/>
            <person name="Francis S.M."/>
            <person name="Suttie J.M."/>
            <person name="Fleming J.S."/>
        </authorList>
    </citation>
    <scope>NUCLEOTIDE SEQUENCE [MRNA]</scope>
    <source>
        <tissue>Antler</tissue>
    </source>
</reference>
<comment type="function">
    <text>Seems to promote the survival of visceral and proprioceptive sensory neurons.</text>
</comment>
<comment type="subcellular location">
    <subcellularLocation>
        <location>Secreted</location>
    </subcellularLocation>
</comment>
<comment type="similarity">
    <text evidence="3">Belongs to the NGF-beta family.</text>
</comment>